<reference key="1">
    <citation type="journal article" date="1984" name="Proc. Natl. Acad. Sci. U.S.A.">
        <title>Rearranged immunoglobulin heavy chain variable region (VH) pseudogene that deletes the second complementarity-determining region.</title>
        <authorList>
            <person name="Takahashi N."/>
            <person name="Noma T."/>
            <person name="Honjo T."/>
        </authorList>
    </citation>
    <scope>NUCLEOTIDE SEQUENCE [MRNA]</scope>
</reference>
<reference key="2">
    <citation type="journal article" date="2003" name="Nature">
        <title>The DNA sequence and analysis of human chromosome 14.</title>
        <authorList>
            <person name="Heilig R."/>
            <person name="Eckenberg R."/>
            <person name="Petit J.-L."/>
            <person name="Fonknechten N."/>
            <person name="Da Silva C."/>
            <person name="Cattolico L."/>
            <person name="Levy M."/>
            <person name="Barbe V."/>
            <person name="De Berardinis V."/>
            <person name="Ureta-Vidal A."/>
            <person name="Pelletier E."/>
            <person name="Vico V."/>
            <person name="Anthouard V."/>
            <person name="Rowen L."/>
            <person name="Madan A."/>
            <person name="Qin S."/>
            <person name="Sun H."/>
            <person name="Du H."/>
            <person name="Pepin K."/>
            <person name="Artiguenave F."/>
            <person name="Robert C."/>
            <person name="Cruaud C."/>
            <person name="Bruels T."/>
            <person name="Jaillon O."/>
            <person name="Friedlander L."/>
            <person name="Samson G."/>
            <person name="Brottier P."/>
            <person name="Cure S."/>
            <person name="Segurens B."/>
            <person name="Aniere F."/>
            <person name="Samain S."/>
            <person name="Crespeau H."/>
            <person name="Abbasi N."/>
            <person name="Aiach N."/>
            <person name="Boscus D."/>
            <person name="Dickhoff R."/>
            <person name="Dors M."/>
            <person name="Dubois I."/>
            <person name="Friedman C."/>
            <person name="Gouyvenoux M."/>
            <person name="James R."/>
            <person name="Madan A."/>
            <person name="Mairey-Estrada B."/>
            <person name="Mangenot S."/>
            <person name="Martins N."/>
            <person name="Menard M."/>
            <person name="Oztas S."/>
            <person name="Ratcliffe A."/>
            <person name="Shaffer T."/>
            <person name="Trask B."/>
            <person name="Vacherie B."/>
            <person name="Bellemere C."/>
            <person name="Belser C."/>
            <person name="Besnard-Gonnet M."/>
            <person name="Bartol-Mavel D."/>
            <person name="Boutard M."/>
            <person name="Briez-Silla S."/>
            <person name="Combette S."/>
            <person name="Dufosse-Laurent V."/>
            <person name="Ferron C."/>
            <person name="Lechaplais C."/>
            <person name="Louesse C."/>
            <person name="Muselet D."/>
            <person name="Magdelenat G."/>
            <person name="Pateau E."/>
            <person name="Petit E."/>
            <person name="Sirvain-Trukniewicz P."/>
            <person name="Trybou A."/>
            <person name="Vega-Czarny N."/>
            <person name="Bataille E."/>
            <person name="Bluet E."/>
            <person name="Bordelais I."/>
            <person name="Dubois M."/>
            <person name="Dumont C."/>
            <person name="Guerin T."/>
            <person name="Haffray S."/>
            <person name="Hammadi R."/>
            <person name="Muanga J."/>
            <person name="Pellouin V."/>
            <person name="Robert D."/>
            <person name="Wunderle E."/>
            <person name="Gauguet G."/>
            <person name="Roy A."/>
            <person name="Sainte-Marthe L."/>
            <person name="Verdier J."/>
            <person name="Verdier-Discala C."/>
            <person name="Hillier L.W."/>
            <person name="Fulton L."/>
            <person name="McPherson J."/>
            <person name="Matsuda F."/>
            <person name="Wilson R."/>
            <person name="Scarpelli C."/>
            <person name="Gyapay G."/>
            <person name="Wincker P."/>
            <person name="Saurin W."/>
            <person name="Quetier F."/>
            <person name="Waterston R."/>
            <person name="Hood L."/>
            <person name="Weissenbach J."/>
        </authorList>
    </citation>
    <scope>NUCLEOTIDE SEQUENCE [LARGE SCALE GENOMIC DNA] (IMGT ALLELE IGHV2-70*01)</scope>
</reference>
<reference key="3">
    <citation type="journal article" date="1970" name="Biochem. J.">
        <title>The amino acid sequences of the Fd fragments of two human gamma-1 heavy chains.</title>
        <authorList>
            <person name="Press E.M."/>
            <person name="Hogg N.M."/>
        </authorList>
    </citation>
    <scope>PROTEIN SEQUENCE OF 20-119</scope>
    <scope>PYROGLUTAMATE FORMATION AT GLN-20</scope>
</reference>
<reference key="4">
    <citation type="journal article" date="1973" name="Science">
        <title>Complete amino acid sequence of the Mu heavy chain of a human IgM immunoglobulin.</title>
        <authorList>
            <person name="Putnam F.W."/>
            <person name="Florent G."/>
            <person name="Paul C."/>
            <person name="Shinoda T."/>
            <person name="Shimizu A."/>
        </authorList>
    </citation>
    <scope>PROTEIN SEQUENCE OF 20-119</scope>
    <scope>PYROGLUTAMATE FORMATION AT GLN-20</scope>
</reference>
<reference key="5">
    <citation type="journal article" date="2001" name="Exp. Clin. Immunogenet.">
        <title>Nomenclature of the human immunoglobulin heavy (IGH) genes.</title>
        <authorList>
            <person name="Lefranc M.P."/>
        </authorList>
    </citation>
    <scope>NOMENCLATURE</scope>
</reference>
<reference key="6">
    <citation type="book" date="2001" name="The Immunoglobulin FactsBook.">
        <title>The Immunoglobulin FactsBook.</title>
        <editorList>
            <person name="Lefranc M.P."/>
            <person name="Lefranc G."/>
        </editorList>
        <authorList>
            <person name="Lefranc M.P."/>
            <person name="Lefranc G."/>
        </authorList>
    </citation>
    <scope>NOMENCLATURE</scope>
</reference>
<reference key="7">
    <citation type="journal article" date="2007" name="Annu. Rev. Genet.">
        <title>Immunoglobulin somatic hypermutation.</title>
        <authorList>
            <person name="Teng G."/>
            <person name="Papavasiliou F.N."/>
        </authorList>
    </citation>
    <scope>REVIEW ON SOMATIC HYPERMUTATION</scope>
</reference>
<reference key="8">
    <citation type="journal article" date="2010" name="J. Allergy Clin. Immunol.">
        <title>Structure and function of immunoglobulins.</title>
        <authorList>
            <person name="Schroeder H.W. Jr."/>
            <person name="Cavacini L."/>
        </authorList>
    </citation>
    <scope>REVIEW ON IMMUNOGLOBULINS</scope>
</reference>
<reference key="9">
    <citation type="journal article" date="2012" name="Nat. Rev. Immunol.">
        <title>Molecular programming of B cell memory.</title>
        <authorList>
            <person name="McHeyzer-Williams M."/>
            <person name="Okitsu S."/>
            <person name="Wang N."/>
            <person name="McHeyzer-Williams L."/>
        </authorList>
    </citation>
    <scope>REVIEW ON FUNCTION</scope>
</reference>
<reference key="10">
    <citation type="journal article" date="2014" name="Front. Immunol.">
        <title>Immunoglobulin and T Cell Receptor Genes: IMGT((R)) and the Birth and Rise of Immunoinformatics.</title>
        <authorList>
            <person name="Lefranc M.P."/>
        </authorList>
    </citation>
    <scope>NOMENCLATURE</scope>
</reference>
<reference key="11">
    <citation type="journal article" date="2008" name="J. Biol. Chem.">
        <title>Thermodynamic consequences of mutations in vernier zone residues of a humanized anti-human epidermal growth factor receptor murine antibody, 528.</title>
        <authorList>
            <person name="Makabe K."/>
            <person name="Nakanishi T."/>
            <person name="Tsumoto K."/>
            <person name="Tanaka Y."/>
            <person name="Kondo H."/>
            <person name="Umetsu M."/>
            <person name="Sone Y."/>
            <person name="Asano R."/>
            <person name="Kumagai I."/>
        </authorList>
    </citation>
    <scope>X-RAY CRYSTALLOGRAPHY (2.10 ANGSTROMS) OF 20-117</scope>
    <scope>DISULFIDE BOND</scope>
</reference>
<accession>P01814</accession>
<accession>A0A0B4J2H3</accession>
<accession>P01815</accession>
<accession>P01816</accession>
<accession>P04438</accession>
<sequence length="119" mass="13260">MDILCSTLLLLTVPSWVLSQVTLRESGPALVKPTQTLTLTCTFSGFSLSTSGMCVSWIRQPPGKALEWLALIDWDDDKYYSTSLKTRLTISKDTSKNQVVLTMTNMDPVDTATYYCARI</sequence>
<keyword id="KW-1064">Adaptive immunity</keyword>
<keyword id="KW-1003">Cell membrane</keyword>
<keyword id="KW-0903">Direct protein sequencing</keyword>
<keyword id="KW-1015">Disulfide bond</keyword>
<keyword id="KW-0391">Immunity</keyword>
<keyword id="KW-1280">Immunoglobulin</keyword>
<keyword id="KW-0393">Immunoglobulin domain</keyword>
<keyword id="KW-0472">Membrane</keyword>
<keyword id="KW-1267">Proteomics identification</keyword>
<keyword id="KW-0873">Pyrrolidone carboxylic acid</keyword>
<keyword id="KW-1185">Reference proteome</keyword>
<keyword id="KW-0964">Secreted</keyword>
<keyword id="KW-0732">Signal</keyword>
<comment type="function">
    <text evidence="7 8 9 10">V region of the variable domain of immunoglobulin heavy chains that participates in the antigen recognition (PubMed:24600447). Immunoglobulins, also known as antibodies, are membrane-bound or secreted glycoproteins produced by B lymphocytes. In the recognition phase of humoral immunity, the membrane-bound immunoglobulins serve as receptors which, upon binding of a specific antigen, trigger the clonal expansion and differentiation of B lymphocytes into immunoglobulins-secreting plasma cells. Secreted immunoglobulins mediate the effector phase of humoral immunity, which results in the elimination of bound antigens (PubMed:20176268, PubMed:22158414). The antigen binding site is formed by the variable domain of one heavy chain, together with that of its associated light chain. Thus, each immunoglobulin has two antigen binding sites with remarkable affinity for a particular antigen. The variable domains are assembled by a process called V-(D)-J rearrangement and can then be subjected to somatic hypermutations which, after exposure to antigen and selection, allow affinity maturation for a particular antigen (PubMed:17576170, PubMed:20176268).</text>
</comment>
<comment type="subunit">
    <text evidence="8">Immunoglobulins are composed of two identical heavy chains and two identical light chains; disulfide-linked.</text>
</comment>
<comment type="subcellular location">
    <subcellularLocation>
        <location evidence="8 9">Secreted</location>
    </subcellularLocation>
    <subcellularLocation>
        <location evidence="8 9">Cell membrane</location>
    </subcellularLocation>
</comment>
<comment type="polymorphism">
    <text evidence="12">There are several alleles. The sequence shown is that of IMGT allele IGHV2-70*01.</text>
</comment>
<comment type="caution">
    <text evidence="12">For examples of full-length immunoglobulin heavy chains (of different isotypes) see AC P0DOX2, AC P0DOX3, AC P0DOX4, AC P0DOX5 and AC P0DOX6.</text>
</comment>
<name>HV270_HUMAN</name>
<dbReference type="EMBL" id="AC245369">
    <property type="status" value="NOT_ANNOTATED_CDS"/>
    <property type="molecule type" value="Genomic_DNA"/>
</dbReference>
<dbReference type="PIR" id="A02088">
    <property type="entry name" value="MHHUOU"/>
</dbReference>
<dbReference type="PIR" id="A02089">
    <property type="entry name" value="G1HUCO"/>
</dbReference>
<dbReference type="PIR" id="A02090">
    <property type="entry name" value="G2HUCS"/>
</dbReference>
<dbReference type="PIR" id="A02091">
    <property type="entry name" value="G1HUDW"/>
</dbReference>
<dbReference type="SMR" id="P01814"/>
<dbReference type="FunCoup" id="P01814">
    <property type="interactions" value="380"/>
</dbReference>
<dbReference type="IMGT_GENE-DB" id="IGHV2-70"/>
<dbReference type="BioMuta" id="IGHV2-70"/>
<dbReference type="MassIVE" id="P01814"/>
<dbReference type="Ensembl" id="ENST00000617374.2">
    <property type="protein sequence ID" value="ENSP00000485200.1"/>
    <property type="gene ID" value="ENSG00000274576.2"/>
</dbReference>
<dbReference type="AGR" id="HGNC:5577"/>
<dbReference type="GeneCards" id="IGHV2-70"/>
<dbReference type="HGNC" id="HGNC:5577">
    <property type="gene designation" value="IGHV2-70"/>
</dbReference>
<dbReference type="HPA" id="ENSG00000274576">
    <property type="expression patterns" value="Group enriched (lymphoid tissue, stomach)"/>
</dbReference>
<dbReference type="neXtProt" id="NX_P01814"/>
<dbReference type="OpenTargets" id="ENSG00000274576"/>
<dbReference type="VEuPathDB" id="HostDB:ENSG00000274576"/>
<dbReference type="GeneTree" id="ENSGT01030000234536"/>
<dbReference type="InParanoid" id="P01814"/>
<dbReference type="OMA" id="DTATHYC"/>
<dbReference type="OrthoDB" id="9590488at2759"/>
<dbReference type="PAN-GO" id="P01814">
    <property type="GO annotations" value="11 GO annotations based on evolutionary models"/>
</dbReference>
<dbReference type="PhylomeDB" id="P01814"/>
<dbReference type="PathwayCommons" id="P01814"/>
<dbReference type="Reactome" id="R-HSA-166663">
    <property type="pathway name" value="Initial triggering of complement"/>
</dbReference>
<dbReference type="Reactome" id="R-HSA-173623">
    <property type="pathway name" value="Classical antibody-mediated complement activation"/>
</dbReference>
<dbReference type="Reactome" id="R-HSA-198933">
    <property type="pathway name" value="Immunoregulatory interactions between a Lymphoid and a non-Lymphoid cell"/>
</dbReference>
<dbReference type="Reactome" id="R-HSA-202733">
    <property type="pathway name" value="Cell surface interactions at the vascular wall"/>
</dbReference>
<dbReference type="Reactome" id="R-HSA-2029481">
    <property type="pathway name" value="FCGR activation"/>
</dbReference>
<dbReference type="Reactome" id="R-HSA-2029482">
    <property type="pathway name" value="Regulation of actin dynamics for phagocytic cup formation"/>
</dbReference>
<dbReference type="Reactome" id="R-HSA-2029485">
    <property type="pathway name" value="Role of phospholipids in phagocytosis"/>
</dbReference>
<dbReference type="Reactome" id="R-HSA-2168880">
    <property type="pathway name" value="Scavenging of heme from plasma"/>
</dbReference>
<dbReference type="Reactome" id="R-HSA-2454202">
    <property type="pathway name" value="Fc epsilon receptor (FCERI) signaling"/>
</dbReference>
<dbReference type="Reactome" id="R-HSA-2730905">
    <property type="pathway name" value="Role of LAT2/NTAL/LAB on calcium mobilization"/>
</dbReference>
<dbReference type="Reactome" id="R-HSA-2871796">
    <property type="pathway name" value="FCERI mediated MAPK activation"/>
</dbReference>
<dbReference type="Reactome" id="R-HSA-2871809">
    <property type="pathway name" value="FCERI mediated Ca+2 mobilization"/>
</dbReference>
<dbReference type="Reactome" id="R-HSA-2871837">
    <property type="pathway name" value="FCERI mediated NF-kB activation"/>
</dbReference>
<dbReference type="Reactome" id="R-HSA-5690714">
    <property type="pathway name" value="CD22 mediated BCR regulation"/>
</dbReference>
<dbReference type="Reactome" id="R-HSA-9664323">
    <property type="pathway name" value="FCGR3A-mediated IL10 synthesis"/>
</dbReference>
<dbReference type="Reactome" id="R-HSA-9664422">
    <property type="pathway name" value="FCGR3A-mediated phagocytosis"/>
</dbReference>
<dbReference type="Reactome" id="R-HSA-9679191">
    <property type="pathway name" value="Potential therapeutics for SARS"/>
</dbReference>
<dbReference type="Reactome" id="R-HSA-977606">
    <property type="pathway name" value="Regulation of Complement cascade"/>
</dbReference>
<dbReference type="Reactome" id="R-HSA-983695">
    <property type="pathway name" value="Antigen activates B Cell Receptor (BCR) leading to generation of second messengers"/>
</dbReference>
<dbReference type="ChiTaRS" id="IGHV2-70">
    <property type="organism name" value="human"/>
</dbReference>
<dbReference type="Pharos" id="P01814">
    <property type="development level" value="Tdark"/>
</dbReference>
<dbReference type="PRO" id="PR:P01814"/>
<dbReference type="Proteomes" id="UP000005640">
    <property type="component" value="Chromosome 14"/>
</dbReference>
<dbReference type="RNAct" id="P01814">
    <property type="molecule type" value="protein"/>
</dbReference>
<dbReference type="Bgee" id="ENSG00000274576">
    <property type="expression patterns" value="Expressed in male germ line stem cell (sensu Vertebrata) in testis and 85 other cell types or tissues"/>
</dbReference>
<dbReference type="GO" id="GO:0005576">
    <property type="term" value="C:extracellular region"/>
    <property type="evidence" value="ECO:0000304"/>
    <property type="project" value="Reactome"/>
</dbReference>
<dbReference type="GO" id="GO:0019814">
    <property type="term" value="C:immunoglobulin complex"/>
    <property type="evidence" value="ECO:0007669"/>
    <property type="project" value="UniProtKB-KW"/>
</dbReference>
<dbReference type="GO" id="GO:0005886">
    <property type="term" value="C:plasma membrane"/>
    <property type="evidence" value="ECO:0000304"/>
    <property type="project" value="Reactome"/>
</dbReference>
<dbReference type="GO" id="GO:0003823">
    <property type="term" value="F:antigen binding"/>
    <property type="evidence" value="ECO:0000318"/>
    <property type="project" value="GO_Central"/>
</dbReference>
<dbReference type="GO" id="GO:0006955">
    <property type="term" value="P:immune response"/>
    <property type="evidence" value="ECO:0000303"/>
    <property type="project" value="UniProtKB"/>
</dbReference>
<dbReference type="GO" id="GO:0016064">
    <property type="term" value="P:immunoglobulin mediated immune response"/>
    <property type="evidence" value="ECO:0000318"/>
    <property type="project" value="GO_Central"/>
</dbReference>
<dbReference type="FunFam" id="2.60.40.10:FF:001533">
    <property type="entry name" value="Immunoglobulin heavy variable 2-26"/>
    <property type="match status" value="1"/>
</dbReference>
<dbReference type="Gene3D" id="2.60.40.10">
    <property type="entry name" value="Immunoglobulins"/>
    <property type="match status" value="1"/>
</dbReference>
<dbReference type="InterPro" id="IPR007110">
    <property type="entry name" value="Ig-like_dom"/>
</dbReference>
<dbReference type="InterPro" id="IPR036179">
    <property type="entry name" value="Ig-like_dom_sf"/>
</dbReference>
<dbReference type="InterPro" id="IPR013783">
    <property type="entry name" value="Ig-like_fold"/>
</dbReference>
<dbReference type="InterPro" id="IPR013106">
    <property type="entry name" value="Ig_V-set"/>
</dbReference>
<dbReference type="InterPro" id="IPR050199">
    <property type="entry name" value="IgHV"/>
</dbReference>
<dbReference type="PANTHER" id="PTHR23266">
    <property type="entry name" value="IMMUNOGLOBULIN HEAVY CHAIN"/>
    <property type="match status" value="1"/>
</dbReference>
<dbReference type="Pfam" id="PF07686">
    <property type="entry name" value="V-set"/>
    <property type="match status" value="1"/>
</dbReference>
<dbReference type="SMART" id="SM00406">
    <property type="entry name" value="IGv"/>
    <property type="match status" value="1"/>
</dbReference>
<dbReference type="SUPFAM" id="SSF48726">
    <property type="entry name" value="Immunoglobulin"/>
    <property type="match status" value="1"/>
</dbReference>
<dbReference type="PROSITE" id="PS50835">
    <property type="entry name" value="IG_LIKE"/>
    <property type="match status" value="1"/>
</dbReference>
<proteinExistence type="evidence at protein level"/>
<organism>
    <name type="scientific">Homo sapiens</name>
    <name type="common">Human</name>
    <dbReference type="NCBI Taxonomy" id="9606"/>
    <lineage>
        <taxon>Eukaryota</taxon>
        <taxon>Metazoa</taxon>
        <taxon>Chordata</taxon>
        <taxon>Craniata</taxon>
        <taxon>Vertebrata</taxon>
        <taxon>Euteleostomi</taxon>
        <taxon>Mammalia</taxon>
        <taxon>Eutheria</taxon>
        <taxon>Euarchontoglires</taxon>
        <taxon>Primates</taxon>
        <taxon>Haplorrhini</taxon>
        <taxon>Catarrhini</taxon>
        <taxon>Hominidae</taxon>
        <taxon>Homo</taxon>
    </lineage>
</organism>
<feature type="signal peptide" evidence="4 5">
    <location>
        <begin position="1"/>
        <end position="19"/>
    </location>
</feature>
<feature type="chain" id="PRO_0000059907" description="Immunoglobulin heavy variable 2-70" evidence="4 5">
    <location>
        <begin position="20"/>
        <end position="119"/>
    </location>
</feature>
<feature type="domain" description="Ig-like" evidence="2">
    <location>
        <begin position="20"/>
        <end position="119" status="greater than"/>
    </location>
</feature>
<feature type="region of interest" description="Framework-1" evidence="1">
    <location>
        <begin position="20"/>
        <end position="44"/>
    </location>
</feature>
<feature type="region of interest" description="Complementarity-determining-1" evidence="1">
    <location>
        <begin position="45"/>
        <end position="54"/>
    </location>
</feature>
<feature type="region of interest" description="Framework-2" evidence="1">
    <location>
        <begin position="55"/>
        <end position="71"/>
    </location>
</feature>
<feature type="region of interest" description="Complementarity-determining-2" evidence="1">
    <location>
        <begin position="72"/>
        <end position="78"/>
    </location>
</feature>
<feature type="region of interest" description="Framework-3" evidence="1">
    <location>
        <begin position="79"/>
        <end position="116"/>
    </location>
</feature>
<feature type="region of interest" description="Complementarity-determining-3" evidence="1">
    <location>
        <begin position="117"/>
        <end position="119" status="greater than"/>
    </location>
</feature>
<feature type="modified residue" description="Pyrrolidone carboxylic acid" evidence="4 5">
    <location>
        <position position="20"/>
    </location>
</feature>
<feature type="disulfide bond" evidence="2 3">
    <location>
        <begin position="41"/>
        <end position="116"/>
    </location>
</feature>
<feature type="sequence conflict" description="In Ref. 1." evidence="12" ref="1">
    <original>W</original>
    <variation>G</variation>
    <location>
        <position position="16"/>
    </location>
</feature>
<feature type="sequence conflict" description="In Ref. 1." evidence="12" ref="1">
    <original>T</original>
    <variation>N</variation>
    <location>
        <position position="22"/>
    </location>
</feature>
<feature type="sequence conflict" description="In Ref. 4; AA sequence." evidence="12" ref="4">
    <original>R</original>
    <variation>T</variation>
    <location>
        <position position="24"/>
    </location>
</feature>
<feature type="sequence conflict" description="In Ref. 3; AA sequence." evidence="12" ref="3">
    <original>K</original>
    <variation>R</variation>
    <location>
        <position position="32"/>
    </location>
</feature>
<feature type="sequence conflict" description="In Ref. 1." evidence="12" ref="1">
    <original>PTQ</original>
    <variation>ATH</variation>
    <location>
        <begin position="33"/>
        <end position="35"/>
    </location>
</feature>
<feature type="sequence conflict" description="In Ref. 4; AA sequence." evidence="12" ref="4">
    <original>TQT</original>
    <variation>KQP</variation>
    <location>
        <begin position="34"/>
        <end position="36"/>
    </location>
</feature>
<feature type="sequence conflict" description="In Ref. 1." evidence="12" ref="1">
    <original>FSLSTS</original>
    <variation>LSVNTR</variation>
    <location>
        <begin position="46"/>
        <end position="51"/>
    </location>
</feature>
<feature type="sequence conflict" description="In Ref. 3; AA sequence." evidence="12" ref="3">
    <original>TSG</original>
    <variation>GET</variation>
    <location>
        <begin position="50"/>
        <end position="52"/>
    </location>
</feature>
<feature type="sequence conflict" description="In Ref. 3; AA sequence." evidence="12" ref="3">
    <original>TS</original>
    <variation>ST</variation>
    <location>
        <begin position="50"/>
        <end position="51"/>
    </location>
</feature>
<feature type="sequence conflict" description="In Ref. 4; AA sequence." evidence="12" ref="4">
    <original>GMC</original>
    <variation>RMR</variation>
    <location>
        <begin position="52"/>
        <end position="54"/>
    </location>
</feature>
<feature type="sequence conflict" description="In Ref. 1." evidence="12" ref="1">
    <original>C</original>
    <variation>S</variation>
    <location>
        <position position="54"/>
    </location>
</feature>
<feature type="sequence conflict" description="In Ref. 3; AA sequence." evidence="12" ref="3">
    <original>S</original>
    <variation>A</variation>
    <location>
        <position position="56"/>
    </location>
</feature>
<feature type="sequence conflict" description="In Ref. 3; AA sequence." evidence="12" ref="3">
    <original>S</original>
    <variation>G</variation>
    <location>
        <position position="56"/>
    </location>
</feature>
<feature type="sequence conflict" description="In Ref. 4; AA sequence." evidence="12" ref="4">
    <original>Q</original>
    <variation>R</variation>
    <location>
        <position position="60"/>
    </location>
</feature>
<feature type="sequence conflict" description="In Ref. 3; AA sequence." evidence="12" ref="3">
    <original>K</original>
    <variation>E</variation>
    <location>
        <position position="64"/>
    </location>
</feature>
<feature type="sequence conflict" description="In Ref. 3; AA sequence." evidence="12" ref="3">
    <original>A</original>
    <variation>G</variation>
    <location>
        <position position="65"/>
    </location>
</feature>
<feature type="sequence conflict" description="In Ref. 3; AA sequence." evidence="12" ref="3">
    <original>LIDWD</original>
    <variation>WDILN</variation>
    <location>
        <begin position="71"/>
        <end position="75"/>
    </location>
</feature>
<feature type="sequence conflict" description="In Ref. 3; AA sequence, 1 and 4; AA sequence." evidence="12" ref="3 1 4">
    <original>L</original>
    <variation>R</variation>
    <location>
        <position position="71"/>
    </location>
</feature>
<feature type="sequence conflict" description="In Ref. 4; AA sequence." evidence="12" ref="4">
    <original>W</original>
    <variation>B</variation>
    <location>
        <position position="74"/>
    </location>
</feature>
<feature type="sequence conflict" description="In Ref. 4; AA sequence." evidence="12" ref="4">
    <original>DKYY</original>
    <variation>KFYW</variation>
    <location>
        <begin position="77"/>
        <end position="80"/>
    </location>
</feature>
<feature type="sequence conflict" description="In Ref. 3; AA sequence." evidence="12" ref="3">
    <original>ST</original>
    <variation>GA</variation>
    <location>
        <begin position="81"/>
        <end position="82"/>
    </location>
</feature>
<feature type="sequence conflict" description="In Ref. 1." evidence="12" ref="1">
    <original>S</original>
    <variation>G</variation>
    <location>
        <position position="81"/>
    </location>
</feature>
<feature type="sequence conflict" description="In Ref. 3; AA sequence." evidence="12" ref="3">
    <original>S</original>
    <variation>N</variation>
    <location>
        <position position="81"/>
    </location>
</feature>
<feature type="sequence conflict" description="In Ref. 3; AA sequence and 1." evidence="12" ref="3 1">
    <original>K</original>
    <variation>E</variation>
    <location>
        <position position="85"/>
    </location>
</feature>
<feature type="sequence conflict" description="In Ref. 4; AA sequence." evidence="12" ref="4">
    <original>K</original>
    <variation>R</variation>
    <location>
        <position position="85"/>
    </location>
</feature>
<feature type="sequence conflict" description="In Ref. 3; AA sequence." evidence="12" ref="3">
    <original>TI</original>
    <variation>AV</variation>
    <location>
        <begin position="89"/>
        <end position="90"/>
    </location>
</feature>
<feature type="sequence conflict" description="In Ref. 4; AA sequence." evidence="12" ref="4">
    <original>T</original>
    <variation>S</variation>
    <location>
        <position position="89"/>
    </location>
</feature>
<feature type="sequence conflict" description="In Ref. 4; AA sequence." evidence="12" ref="4">
    <original>DT</original>
    <variation>ND</variation>
    <location>
        <begin position="93"/>
        <end position="94"/>
    </location>
</feature>
<feature type="sequence conflict" description="In Ref. 3; AA sequence." evidence="12" ref="3">
    <original>K</original>
    <variation>R</variation>
    <location>
        <position position="96"/>
    </location>
</feature>
<feature type="sequence conflict" description="In Ref. 3; AA sequence." evidence="12" ref="3">
    <original>TMTNMDPV</original>
    <variation>SMNTVGPG</variation>
    <location>
        <begin position="102"/>
        <end position="109"/>
    </location>
</feature>
<feature type="sequence conflict" description="In Ref. 4; AA sequence." evidence="12" ref="4">
    <original>TMTNMD</original>
    <variation>IMINVN</variation>
    <location>
        <begin position="102"/>
        <end position="107"/>
    </location>
</feature>
<feature type="sequence conflict" description="In Ref. 1." evidence="12" ref="1">
    <original>TM</original>
    <variation>KV</variation>
    <location>
        <begin position="102"/>
        <end position="103"/>
    </location>
</feature>
<feature type="sequence conflict" description="In Ref. 3; AA sequence." evidence="12" ref="3">
    <location>
        <begin position="103"/>
        <end position="105"/>
    </location>
</feature>
<feature type="sequence conflict" description="In Ref. 1." evidence="12" ref="1">
    <original>V</original>
    <variation>A</variation>
    <location>
        <position position="109"/>
    </location>
</feature>
<feature type="sequence conflict" description="In Ref. 1." evidence="12" ref="1">
    <original>I</original>
    <variation>M</variation>
    <location>
        <position position="119"/>
    </location>
</feature>
<feature type="sequence conflict" description="In Ref. 3; AA sequence." evidence="12" ref="3">
    <original>I</original>
    <variation>S</variation>
    <location>
        <position position="119"/>
    </location>
</feature>
<feature type="sequence conflict" description="In Ref. 4; AA sequence." evidence="12" ref="4">
    <original>I</original>
    <variation>V</variation>
    <location>
        <position position="119"/>
    </location>
</feature>
<feature type="non-terminal residue">
    <location>
        <position position="119"/>
    </location>
</feature>
<protein>
    <recommendedName>
        <fullName evidence="6 11">Immunoglobulin heavy variable 2-70</fullName>
    </recommendedName>
    <alternativeName>
        <fullName evidence="14">Ig heavy chain V-II region COR</fullName>
    </alternativeName>
    <alternativeName>
        <fullName evidence="14">Ig heavy chain V-II region DAW</fullName>
    </alternativeName>
    <alternativeName>
        <fullName evidence="13">Ig heavy chain V-II region OU</fullName>
    </alternativeName>
    <alternativeName>
        <fullName evidence="15">Ig heavy chain V-II region SESS</fullName>
    </alternativeName>
</protein>
<evidence type="ECO:0000250" key="1">
    <source>
        <dbReference type="UniProtKB" id="P23083"/>
    </source>
</evidence>
<evidence type="ECO:0000255" key="2">
    <source>
        <dbReference type="PROSITE-ProRule" id="PRU00114"/>
    </source>
</evidence>
<evidence type="ECO:0000269" key="3">
    <source>
    </source>
</evidence>
<evidence type="ECO:0000269" key="4">
    <source>
    </source>
</evidence>
<evidence type="ECO:0000269" key="5">
    <source>
    </source>
</evidence>
<evidence type="ECO:0000303" key="6">
    <source>
    </source>
</evidence>
<evidence type="ECO:0000303" key="7">
    <source>
    </source>
</evidence>
<evidence type="ECO:0000303" key="8">
    <source>
    </source>
</evidence>
<evidence type="ECO:0000303" key="9">
    <source>
    </source>
</evidence>
<evidence type="ECO:0000303" key="10">
    <source>
    </source>
</evidence>
<evidence type="ECO:0000303" key="11">
    <source ref="6"/>
</evidence>
<evidence type="ECO:0000305" key="12"/>
<evidence type="ECO:0000305" key="13">
    <source>
    </source>
</evidence>
<evidence type="ECO:0000305" key="14">
    <source>
    </source>
</evidence>
<evidence type="ECO:0000305" key="15">
    <source>
    </source>
</evidence>
<gene>
    <name evidence="6 11" type="primary">IGHV2-70</name>
</gene>